<protein>
    <recommendedName>
        <fullName evidence="5 6">Conotoxin vil14a</fullName>
    </recommendedName>
    <alternativeName>
        <fullName evidence="6">Conotoxin vil14.1</fullName>
    </alternativeName>
</protein>
<feature type="signal peptide" evidence="1">
    <location>
        <begin position="1"/>
        <end position="22"/>
    </location>
</feature>
<feature type="propeptide" id="PRO_0000446988" evidence="7">
    <location>
        <begin position="23"/>
        <end position="90"/>
    </location>
</feature>
<feature type="peptide" id="PRO_0000044484" description="Conotoxin vil14a" evidence="3">
    <location>
        <begin position="91"/>
        <end position="117"/>
    </location>
</feature>
<feature type="region of interest" description="Disordered" evidence="2">
    <location>
        <begin position="53"/>
        <end position="86"/>
    </location>
</feature>
<feature type="compositionally biased region" description="Basic and acidic residues" evidence="2">
    <location>
        <begin position="62"/>
        <end position="80"/>
    </location>
</feature>
<feature type="disulfide bond" evidence="3 4 9">
    <location>
        <begin position="96"/>
        <end position="116"/>
    </location>
</feature>
<feature type="disulfide bond" evidence="3 4 9">
    <location>
        <begin position="100"/>
        <end position="112"/>
    </location>
</feature>
<feature type="sequence conflict" description="In Ref. 1; AYK27405." evidence="7" ref="1">
    <original>M</original>
    <variation>V</variation>
    <location>
        <position position="71"/>
    </location>
</feature>
<feature type="sequence conflict" description="In Ref. 1; AYK27405 and 2; AA sequence." evidence="7" ref="1 2">
    <location>
        <position position="117"/>
    </location>
</feature>
<feature type="helix" evidence="10">
    <location>
        <begin position="93"/>
        <end position="101"/>
    </location>
</feature>
<feature type="turn" evidence="10">
    <location>
        <begin position="110"/>
        <end position="115"/>
    </location>
</feature>
<organism>
    <name type="scientific">Conus villepinii</name>
    <name type="common">Villepin's cone</name>
    <dbReference type="NCBI Taxonomy" id="257347"/>
    <lineage>
        <taxon>Eukaryota</taxon>
        <taxon>Metazoa</taxon>
        <taxon>Spiralia</taxon>
        <taxon>Lophotrochozoa</taxon>
        <taxon>Mollusca</taxon>
        <taxon>Gastropoda</taxon>
        <taxon>Caenogastropoda</taxon>
        <taxon>Neogastropoda</taxon>
        <taxon>Conoidea</taxon>
        <taxon>Conidae</taxon>
        <taxon>Conus</taxon>
        <taxon>Dauciconus</taxon>
    </lineage>
</organism>
<keyword id="KW-0002">3D-structure</keyword>
<keyword id="KW-0165">Cleavage on pair of basic residues</keyword>
<keyword id="KW-0903">Direct protein sequencing</keyword>
<keyword id="KW-1015">Disulfide bond</keyword>
<keyword id="KW-0528">Neurotoxin</keyword>
<keyword id="KW-0964">Secreted</keyword>
<keyword id="KW-0732">Signal</keyword>
<keyword id="KW-0800">Toxin</keyword>
<comment type="subcellular location">
    <subcellularLocation>
        <location evidence="3">Secreted</location>
    </subcellularLocation>
</comment>
<comment type="tissue specificity">
    <text evidence="8">Expressed by the venom duct.</text>
</comment>
<comment type="domain">
    <text evidence="7">The cysteine framework is XIV (C-C-C-C).</text>
</comment>
<comment type="mass spectrometry" mass="2872.5" error="0.1" method="MALDI" evidence="3"/>
<comment type="miscellaneous">
    <text evidence="4">Negative results: very weakly inhibits potassium channels in PC12 cells. Very weakly and reversibly inhibits Kv1.3/KCNA3 in HEK293 cells (Ki=12.1 uM). Does not inhibit Kv1.1/KCNA1, Kv1.2/KCNA2 and Kv1.3/KCNA3 when expressed in oocytes (tested at 10 uM).</text>
</comment>
<comment type="similarity">
    <text evidence="7">Belongs to the conotoxin R superfamily.</text>
</comment>
<accession>P84704</accession>
<accession>A0A3G1VU89</accession>
<dbReference type="EMBL" id="MH750032">
    <property type="protein sequence ID" value="AYK27405.1"/>
    <property type="molecule type" value="mRNA"/>
</dbReference>
<dbReference type="PDB" id="6EFE">
    <property type="method" value="NMR"/>
    <property type="chains" value="A=91-117"/>
</dbReference>
<dbReference type="PDBsum" id="6EFE"/>
<dbReference type="SMR" id="P84704"/>
<dbReference type="ConoServer" id="1619">
    <property type="toxin name" value="VilXIVA"/>
</dbReference>
<dbReference type="GO" id="GO:0005576">
    <property type="term" value="C:extracellular region"/>
    <property type="evidence" value="ECO:0007669"/>
    <property type="project" value="UniProtKB-SubCell"/>
</dbReference>
<dbReference type="GO" id="GO:0090729">
    <property type="term" value="F:toxin activity"/>
    <property type="evidence" value="ECO:0007669"/>
    <property type="project" value="UniProtKB-KW"/>
</dbReference>
<name>CREA_CONVL</name>
<sequence length="117" mass="13143">MGFRVLVLVVMATTSALPFTFSEEPGRSPFRPALRSEEAQALRHGLTLLLARRADGQPPDMRQPEMRRPEMRRPEVRQPEFAETPVGQKRGGLGRCIYNCMNSGGGLSFIQCKTMCY</sequence>
<reference key="1">
    <citation type="journal article" date="2018" name="Peptides">
        <title>Definition of the R-superfamily of conotoxins: structural convergence of helix-loop-helix peptidic scaffolds.</title>
        <authorList>
            <person name="Moeller C."/>
            <person name="Dovell S."/>
            <person name="Melaun C."/>
            <person name="Mari F."/>
        </authorList>
    </citation>
    <scope>NUCLEOTIDE SEQUENCE [MRNA]</scope>
    <scope>STRUCTURE BY NMR OF 91-117</scope>
    <scope>DISULFIDE BOND</scope>
    <scope>SYNTHESIS OF 91-117</scope>
    <source>
        <tissue>Venom</tissue>
        <tissue>Venom duct</tissue>
    </source>
</reference>
<reference key="2">
    <citation type="journal article" date="2005" name="Biochemistry">
        <title>A novel conotoxin framework with a helix-loop-helix (Cs alpha/alpha) fold.</title>
        <authorList>
            <person name="Moller C."/>
            <person name="Rahmankhah S."/>
            <person name="Lauer-Fields J."/>
            <person name="Bubis J."/>
            <person name="Fields G.B."/>
            <person name="Mari F."/>
        </authorList>
    </citation>
    <scope>PROTEIN SEQUENCE OF 91-117</scope>
    <scope>FUNCTION</scope>
    <scope>SUBCELLULAR LOCATION</scope>
    <scope>MASS SPECTROMETRY</scope>
    <scope>DISULFIDE BONDS</scope>
    <source>
        <tissue>Venom</tissue>
    </source>
</reference>
<proteinExistence type="evidence at protein level"/>
<evidence type="ECO:0000255" key="1"/>
<evidence type="ECO:0000256" key="2">
    <source>
        <dbReference type="SAM" id="MobiDB-lite"/>
    </source>
</evidence>
<evidence type="ECO:0000269" key="3">
    <source>
    </source>
</evidence>
<evidence type="ECO:0000269" key="4">
    <source>
    </source>
</evidence>
<evidence type="ECO:0000303" key="5">
    <source>
    </source>
</evidence>
<evidence type="ECO:0000303" key="6">
    <source>
    </source>
</evidence>
<evidence type="ECO:0000305" key="7"/>
<evidence type="ECO:0000305" key="8">
    <source>
    </source>
</evidence>
<evidence type="ECO:0000312" key="9">
    <source>
        <dbReference type="PDB" id="6EFE"/>
    </source>
</evidence>
<evidence type="ECO:0007829" key="10">
    <source>
        <dbReference type="PDB" id="6EFE"/>
    </source>
</evidence>